<evidence type="ECO:0000255" key="1">
    <source>
        <dbReference type="HAMAP-Rule" id="MF_00120"/>
    </source>
</evidence>
<gene>
    <name evidence="1" type="primary">gatA</name>
    <name type="ordered locus">SRU_0671</name>
</gene>
<protein>
    <recommendedName>
        <fullName evidence="1">Glutamyl-tRNA(Gln) amidotransferase subunit A</fullName>
        <shortName evidence="1">Glu-ADT subunit A</shortName>
        <ecNumber evidence="1">6.3.5.7</ecNumber>
    </recommendedName>
</protein>
<dbReference type="EC" id="6.3.5.7" evidence="1"/>
<dbReference type="EMBL" id="CP000159">
    <property type="protein sequence ID" value="ABC45323.1"/>
    <property type="molecule type" value="Genomic_DNA"/>
</dbReference>
<dbReference type="RefSeq" id="WP_011403442.1">
    <property type="nucleotide sequence ID" value="NC_007677.1"/>
</dbReference>
<dbReference type="RefSeq" id="YP_444809.1">
    <property type="nucleotide sequence ID" value="NC_007677.1"/>
</dbReference>
<dbReference type="SMR" id="Q2S4S2"/>
<dbReference type="STRING" id="309807.SRU_0671"/>
<dbReference type="EnsemblBacteria" id="ABC45323">
    <property type="protein sequence ID" value="ABC45323"/>
    <property type="gene ID" value="SRU_0671"/>
</dbReference>
<dbReference type="KEGG" id="sru:SRU_0671"/>
<dbReference type="PATRIC" id="fig|309807.25.peg.689"/>
<dbReference type="eggNOG" id="COG0154">
    <property type="taxonomic scope" value="Bacteria"/>
</dbReference>
<dbReference type="HOGENOM" id="CLU_009600_0_3_10"/>
<dbReference type="OrthoDB" id="9811471at2"/>
<dbReference type="Proteomes" id="UP000008674">
    <property type="component" value="Chromosome"/>
</dbReference>
<dbReference type="GO" id="GO:0030956">
    <property type="term" value="C:glutamyl-tRNA(Gln) amidotransferase complex"/>
    <property type="evidence" value="ECO:0007669"/>
    <property type="project" value="InterPro"/>
</dbReference>
<dbReference type="GO" id="GO:0005524">
    <property type="term" value="F:ATP binding"/>
    <property type="evidence" value="ECO:0007669"/>
    <property type="project" value="UniProtKB-KW"/>
</dbReference>
<dbReference type="GO" id="GO:0050567">
    <property type="term" value="F:glutaminyl-tRNA synthase (glutamine-hydrolyzing) activity"/>
    <property type="evidence" value="ECO:0007669"/>
    <property type="project" value="UniProtKB-UniRule"/>
</dbReference>
<dbReference type="GO" id="GO:0006412">
    <property type="term" value="P:translation"/>
    <property type="evidence" value="ECO:0007669"/>
    <property type="project" value="UniProtKB-UniRule"/>
</dbReference>
<dbReference type="Gene3D" id="3.90.1300.10">
    <property type="entry name" value="Amidase signature (AS) domain"/>
    <property type="match status" value="1"/>
</dbReference>
<dbReference type="HAMAP" id="MF_00120">
    <property type="entry name" value="GatA"/>
    <property type="match status" value="1"/>
</dbReference>
<dbReference type="InterPro" id="IPR000120">
    <property type="entry name" value="Amidase"/>
</dbReference>
<dbReference type="InterPro" id="IPR020556">
    <property type="entry name" value="Amidase_CS"/>
</dbReference>
<dbReference type="InterPro" id="IPR023631">
    <property type="entry name" value="Amidase_dom"/>
</dbReference>
<dbReference type="InterPro" id="IPR036928">
    <property type="entry name" value="AS_sf"/>
</dbReference>
<dbReference type="InterPro" id="IPR004412">
    <property type="entry name" value="GatA"/>
</dbReference>
<dbReference type="PANTHER" id="PTHR11895:SF7">
    <property type="entry name" value="GLUTAMYL-TRNA(GLN) AMIDOTRANSFERASE SUBUNIT A, MITOCHONDRIAL"/>
    <property type="match status" value="1"/>
</dbReference>
<dbReference type="PANTHER" id="PTHR11895">
    <property type="entry name" value="TRANSAMIDASE"/>
    <property type="match status" value="1"/>
</dbReference>
<dbReference type="Pfam" id="PF01425">
    <property type="entry name" value="Amidase"/>
    <property type="match status" value="1"/>
</dbReference>
<dbReference type="SUPFAM" id="SSF75304">
    <property type="entry name" value="Amidase signature (AS) enzymes"/>
    <property type="match status" value="1"/>
</dbReference>
<dbReference type="PROSITE" id="PS00571">
    <property type="entry name" value="AMIDASES"/>
    <property type="match status" value="1"/>
</dbReference>
<name>GATA_SALRD</name>
<organism>
    <name type="scientific">Salinibacter ruber (strain DSM 13855 / M31)</name>
    <dbReference type="NCBI Taxonomy" id="309807"/>
    <lineage>
        <taxon>Bacteria</taxon>
        <taxon>Pseudomonadati</taxon>
        <taxon>Rhodothermota</taxon>
        <taxon>Rhodothermia</taxon>
        <taxon>Rhodothermales</taxon>
        <taxon>Salinibacteraceae</taxon>
        <taxon>Salinibacter</taxon>
    </lineage>
</organism>
<feature type="chain" id="PRO_0000241152" description="Glutamyl-tRNA(Gln) amidotransferase subunit A">
    <location>
        <begin position="1"/>
        <end position="514"/>
    </location>
</feature>
<feature type="active site" description="Charge relay system" evidence="1">
    <location>
        <position position="76"/>
    </location>
</feature>
<feature type="active site" description="Charge relay system" evidence="1">
    <location>
        <position position="151"/>
    </location>
</feature>
<feature type="active site" description="Acyl-ester intermediate" evidence="1">
    <location>
        <position position="175"/>
    </location>
</feature>
<sequence length="514" mass="55538">MEYPTFTDARRALDAGETSCEALVSSFLERIDARDNEINAFTSVDQDGALNHARYLDSQRERGNPRPLAGLVLAVKDNICIRGYPVSCGSKMLADFSSLYDATVIDRLRDAGAIFIGKTNCDEFAMGSSNETSHFGPVRNPHAPEYVPGGSSGGSAAAVAAGLCHAALGSDTGGSVRQPAAFCGTVGLKPTYGRVSRSGLVAFASSLDVIGPLTRSAEDAATILNVIAGEDERDSTSAPVDVPDYTEGLGDGVEGLRLGLPEEYFAEGLDDDIRRMVTEQVDRLDDAGATVEEVSLPHTEYGVATYYLVATAEASSNLARYDGIRYGHRADLQETKQALQERREELKEELASARAQGDEARADTLEAQLDDEQSTLDALYTRSRTEGFGDEVKRRIMLGTYALSAGYYDKYYEKAQRVRTLIRHDFERAFEDVDALITPTTPTPPFRLGEKTDDPLEMYLNDIYTVTANLAGLPGLTVPIGEHPDTPGLPVGLQVLGPHFDEALLLRIGAAIME</sequence>
<accession>Q2S4S2</accession>
<keyword id="KW-0067">ATP-binding</keyword>
<keyword id="KW-0436">Ligase</keyword>
<keyword id="KW-0547">Nucleotide-binding</keyword>
<keyword id="KW-0648">Protein biosynthesis</keyword>
<keyword id="KW-1185">Reference proteome</keyword>
<reference key="1">
    <citation type="journal article" date="2005" name="Proc. Natl. Acad. Sci. U.S.A.">
        <title>The genome of Salinibacter ruber: convergence and gene exchange among hyperhalophilic bacteria and archaea.</title>
        <authorList>
            <person name="Mongodin E.F."/>
            <person name="Nelson K.E."/>
            <person name="Daugherty S."/>
            <person name="DeBoy R.T."/>
            <person name="Wister J."/>
            <person name="Khouri H."/>
            <person name="Weidman J."/>
            <person name="Walsh D.A."/>
            <person name="Papke R.T."/>
            <person name="Sanchez Perez G."/>
            <person name="Sharma A.K."/>
            <person name="Nesbo C.L."/>
            <person name="MacLeod D."/>
            <person name="Bapteste E."/>
            <person name="Doolittle W.F."/>
            <person name="Charlebois R.L."/>
            <person name="Legault B."/>
            <person name="Rodriguez-Valera F."/>
        </authorList>
    </citation>
    <scope>NUCLEOTIDE SEQUENCE [LARGE SCALE GENOMIC DNA]</scope>
    <source>
        <strain>DSM 13855 / CECT 5946 / M31</strain>
    </source>
</reference>
<comment type="function">
    <text evidence="1">Allows the formation of correctly charged Gln-tRNA(Gln) through the transamidation of misacylated Glu-tRNA(Gln) in organisms which lack glutaminyl-tRNA synthetase. The reaction takes place in the presence of glutamine and ATP through an activated gamma-phospho-Glu-tRNA(Gln).</text>
</comment>
<comment type="catalytic activity">
    <reaction evidence="1">
        <text>L-glutamyl-tRNA(Gln) + L-glutamine + ATP + H2O = L-glutaminyl-tRNA(Gln) + L-glutamate + ADP + phosphate + H(+)</text>
        <dbReference type="Rhea" id="RHEA:17521"/>
        <dbReference type="Rhea" id="RHEA-COMP:9681"/>
        <dbReference type="Rhea" id="RHEA-COMP:9684"/>
        <dbReference type="ChEBI" id="CHEBI:15377"/>
        <dbReference type="ChEBI" id="CHEBI:15378"/>
        <dbReference type="ChEBI" id="CHEBI:29985"/>
        <dbReference type="ChEBI" id="CHEBI:30616"/>
        <dbReference type="ChEBI" id="CHEBI:43474"/>
        <dbReference type="ChEBI" id="CHEBI:58359"/>
        <dbReference type="ChEBI" id="CHEBI:78520"/>
        <dbReference type="ChEBI" id="CHEBI:78521"/>
        <dbReference type="ChEBI" id="CHEBI:456216"/>
        <dbReference type="EC" id="6.3.5.7"/>
    </reaction>
</comment>
<comment type="subunit">
    <text evidence="1">Heterotrimer of A, B and C subunits.</text>
</comment>
<comment type="similarity">
    <text evidence="1">Belongs to the amidase family. GatA subfamily.</text>
</comment>
<proteinExistence type="inferred from homology"/>